<comment type="function">
    <text evidence="4 6">Acts as one of several non-catalytic accessory components of the cytoplasmic dynein 1 complex that are thought to be involved in linking dynein to cargos and to adapter proteins that regulate dynein function. Cytoplasmic dynein 1 acts as a motor for the intracellular retrograde motility of vesicles and organelles along microtubules. May play a role in binding dynein to membranous organelles or chromosomes. Probably involved in the microtubule-dependent transport of pericentrin. Is required for progress through the spindle assembly checkpoint. The phosphorylated form appears to be involved in the selective removal of MAD1L1 and MAD1L2 but not BUB1B from kinetochores. Forms a functional Rab11/RAB11FIP3/dynein complex onto endosomal membrane that regulates the movement of peripheral sorting endosomes (SE) along microtubule tracks toward the microtubule organizing center/centrosome, generating the endosomal recycling compartment (ERC) (PubMed:20026645).</text>
</comment>
<comment type="subunit">
    <text evidence="1 4 6 7">Homodimer (By similarity). The cytoplasmic dynein 1 complex consists of two catalytic heavy chains (HCs) and a number of non-catalytic subunits presented by intermediate chains (ICs), light intermediate chains (LICs) and light chains (LCs); the composition seems to vary in respect to the IC, LIC and LC composition. The heavy chain homodimer serves as a scaffold for the probable homodimeric assembly of the respective non-catalytic subunits. The ICs and LICs bind directly to the HC dimer and the LCs assemble on the IC dimer. Self-associates. Interacts with DYNC1H1; DYNC1LI1 and DYNC1LI2 bind mutually exclusive to DYNC1H1. Interacts with PCNT (By similarity). Forms a complex with RAB11FIP3 and RAB11A1; the interaction between DYNC1LI1 and RAB11FIP3 is direct and induces DYNC1LI1 localization onto endosomal membrane; the complex regulates endocytic trafficking (PubMed:20026645). Interacts with RUFY3 (PubMed:35314674).</text>
</comment>
<comment type="subunit">
    <text evidence="5">(Microbial infection) Interacts with human adenovirus 5 hexon protein; this interaction probably allows virus intracellular transport.</text>
</comment>
<comment type="interaction">
    <interactant intactId="EBI-2556107">
        <id>Q9Y6G9</id>
    </interactant>
    <interactant intactId="EBI-2511669">
        <id>P15259</id>
        <label>PGAM2</label>
    </interactant>
    <organismsDiffer>false</organismsDiffer>
    <experiments>3</experiments>
</comment>
<comment type="interaction">
    <interactant intactId="EBI-2556107">
        <id>Q9Y6G9</id>
    </interactant>
    <interactant intactId="EBI-307352">
        <id>Q04864</id>
        <label>REL</label>
    </interactant>
    <organismsDiffer>false</organismsDiffer>
    <experiments>4</experiments>
</comment>
<comment type="subcellular location">
    <subcellularLocation>
        <location evidence="1">Cytoplasm</location>
    </subcellularLocation>
    <subcellularLocation>
        <location evidence="4">Chromosome</location>
        <location evidence="4">Centromere</location>
        <location evidence="4">Kinetochore</location>
    </subcellularLocation>
    <subcellularLocation>
        <location evidence="4">Cytoplasm</location>
        <location evidence="4">Cytoskeleton</location>
        <location evidence="4">Spindle pole</location>
    </subcellularLocation>
    <subcellularLocation>
        <location evidence="6">Recycling endosome membrane</location>
    </subcellularLocation>
    <text evidence="6">During interphase, localized in vesicles continuously moving from peripheral sorting endosomes in the cell towards the pericentrosomal endosomal recycling compartment (ERC).</text>
</comment>
<comment type="PTM">
    <text evidence="4">Phosphorylated during mitosis but not in interphase.</text>
</comment>
<comment type="similarity">
    <text evidence="11">Belongs to the dynein light intermediate chain family.</text>
</comment>
<dbReference type="EMBL" id="AF078849">
    <property type="protein sequence ID" value="AAD44481.1"/>
    <property type="molecule type" value="mRNA"/>
</dbReference>
<dbReference type="EMBL" id="AK222573">
    <property type="protein sequence ID" value="BAD96293.1"/>
    <property type="molecule type" value="mRNA"/>
</dbReference>
<dbReference type="EMBL" id="AK222653">
    <property type="protein sequence ID" value="BAD96373.1"/>
    <property type="molecule type" value="mRNA"/>
</dbReference>
<dbReference type="EMBL" id="CH471055">
    <property type="protein sequence ID" value="EAW64433.1"/>
    <property type="molecule type" value="Genomic_DNA"/>
</dbReference>
<dbReference type="EMBL" id="BC131620">
    <property type="protein sequence ID" value="AAI31621.1"/>
    <property type="molecule type" value="mRNA"/>
</dbReference>
<dbReference type="CCDS" id="CCDS2654.1"/>
<dbReference type="RefSeq" id="NP_057225.2">
    <property type="nucleotide sequence ID" value="NM_016141.4"/>
</dbReference>
<dbReference type="PDB" id="6B9H">
    <property type="method" value="X-ray"/>
    <property type="resolution" value="1.50 A"/>
    <property type="chains" value="B=433-458"/>
</dbReference>
<dbReference type="PDB" id="6PSD">
    <property type="method" value="X-ray"/>
    <property type="resolution" value="2.66 A"/>
    <property type="chains" value="B/D/F/H/J/L/N/P=433-457"/>
</dbReference>
<dbReference type="PDB" id="6PSE">
    <property type="method" value="X-ray"/>
    <property type="resolution" value="2.40 A"/>
    <property type="chains" value="C=433-458"/>
</dbReference>
<dbReference type="PDBsum" id="6B9H"/>
<dbReference type="PDBsum" id="6PSD"/>
<dbReference type="PDBsum" id="6PSE"/>
<dbReference type="SMR" id="Q9Y6G9"/>
<dbReference type="BioGRID" id="119327">
    <property type="interactions" value="248"/>
</dbReference>
<dbReference type="CORUM" id="Q9Y6G9"/>
<dbReference type="FunCoup" id="Q9Y6G9">
    <property type="interactions" value="2147"/>
</dbReference>
<dbReference type="IntAct" id="Q9Y6G9">
    <property type="interactions" value="100"/>
</dbReference>
<dbReference type="MINT" id="Q9Y6G9"/>
<dbReference type="STRING" id="9606.ENSP00000273130"/>
<dbReference type="GlyCosmos" id="Q9Y6G9">
    <property type="glycosylation" value="2 sites, 1 glycan"/>
</dbReference>
<dbReference type="GlyGen" id="Q9Y6G9">
    <property type="glycosylation" value="8 sites, 1 O-linked glycan (8 sites)"/>
</dbReference>
<dbReference type="iPTMnet" id="Q9Y6G9"/>
<dbReference type="MetOSite" id="Q9Y6G9"/>
<dbReference type="PhosphoSitePlus" id="Q9Y6G9"/>
<dbReference type="SwissPalm" id="Q9Y6G9"/>
<dbReference type="BioMuta" id="DYNC1LI1"/>
<dbReference type="DMDM" id="134047749"/>
<dbReference type="CPTAC" id="CPTAC-965"/>
<dbReference type="jPOST" id="Q9Y6G9"/>
<dbReference type="MassIVE" id="Q9Y6G9"/>
<dbReference type="PaxDb" id="9606-ENSP00000273130"/>
<dbReference type="PeptideAtlas" id="Q9Y6G9"/>
<dbReference type="ProteomicsDB" id="86677"/>
<dbReference type="Pumba" id="Q9Y6G9"/>
<dbReference type="Antibodypedia" id="27761">
    <property type="antibodies" value="245 antibodies from 23 providers"/>
</dbReference>
<dbReference type="DNASU" id="51143"/>
<dbReference type="Ensembl" id="ENST00000273130.9">
    <property type="protein sequence ID" value="ENSP00000273130.4"/>
    <property type="gene ID" value="ENSG00000144635.9"/>
</dbReference>
<dbReference type="GeneID" id="51143"/>
<dbReference type="KEGG" id="hsa:51143"/>
<dbReference type="MANE-Select" id="ENST00000273130.9">
    <property type="protein sequence ID" value="ENSP00000273130.4"/>
    <property type="RefSeq nucleotide sequence ID" value="NM_016141.4"/>
    <property type="RefSeq protein sequence ID" value="NP_057225.2"/>
</dbReference>
<dbReference type="UCSC" id="uc003cfb.4">
    <property type="organism name" value="human"/>
</dbReference>
<dbReference type="AGR" id="HGNC:18745"/>
<dbReference type="CTD" id="51143"/>
<dbReference type="DisGeNET" id="51143"/>
<dbReference type="GeneCards" id="DYNC1LI1"/>
<dbReference type="HGNC" id="HGNC:18745">
    <property type="gene designation" value="DYNC1LI1"/>
</dbReference>
<dbReference type="HPA" id="ENSG00000144635">
    <property type="expression patterns" value="Low tissue specificity"/>
</dbReference>
<dbReference type="MIM" id="615890">
    <property type="type" value="gene"/>
</dbReference>
<dbReference type="neXtProt" id="NX_Q9Y6G9"/>
<dbReference type="OpenTargets" id="ENSG00000144635"/>
<dbReference type="PharmGKB" id="PA38670"/>
<dbReference type="VEuPathDB" id="HostDB:ENSG00000144635"/>
<dbReference type="eggNOG" id="KOG3905">
    <property type="taxonomic scope" value="Eukaryota"/>
</dbReference>
<dbReference type="GeneTree" id="ENSGT00390000008295"/>
<dbReference type="HOGENOM" id="CLU_021937_2_1_1"/>
<dbReference type="InParanoid" id="Q9Y6G9"/>
<dbReference type="OMA" id="RCNIWIL"/>
<dbReference type="OrthoDB" id="27603at2759"/>
<dbReference type="PAN-GO" id="Q9Y6G9">
    <property type="GO annotations" value="4 GO annotations based on evolutionary models"/>
</dbReference>
<dbReference type="PhylomeDB" id="Q9Y6G9"/>
<dbReference type="TreeFam" id="TF352602"/>
<dbReference type="PathwayCommons" id="Q9Y6G9"/>
<dbReference type="Reactome" id="R-HSA-141444">
    <property type="pathway name" value="Amplification of signal from unattached kinetochores via a MAD2 inhibitory signal"/>
</dbReference>
<dbReference type="Reactome" id="R-HSA-2132295">
    <property type="pathway name" value="MHC class II antigen presentation"/>
</dbReference>
<dbReference type="Reactome" id="R-HSA-2467813">
    <property type="pathway name" value="Separation of Sister Chromatids"/>
</dbReference>
<dbReference type="Reactome" id="R-HSA-2500257">
    <property type="pathway name" value="Resolution of Sister Chromatid Cohesion"/>
</dbReference>
<dbReference type="Reactome" id="R-HSA-3371497">
    <property type="pathway name" value="HSP90 chaperone cycle for steroid hormone receptors (SHR) in the presence of ligand"/>
</dbReference>
<dbReference type="Reactome" id="R-HSA-5663220">
    <property type="pathway name" value="RHO GTPases Activate Formins"/>
</dbReference>
<dbReference type="Reactome" id="R-HSA-6798695">
    <property type="pathway name" value="Neutrophil degranulation"/>
</dbReference>
<dbReference type="Reactome" id="R-HSA-6807878">
    <property type="pathway name" value="COPI-mediated anterograde transport"/>
</dbReference>
<dbReference type="Reactome" id="R-HSA-6811436">
    <property type="pathway name" value="COPI-independent Golgi-to-ER retrograde traffic"/>
</dbReference>
<dbReference type="Reactome" id="R-HSA-68877">
    <property type="pathway name" value="Mitotic Prometaphase"/>
</dbReference>
<dbReference type="Reactome" id="R-HSA-9609690">
    <property type="pathway name" value="HCMV Early Events"/>
</dbReference>
<dbReference type="Reactome" id="R-HSA-9646399">
    <property type="pathway name" value="Aggrephagy"/>
</dbReference>
<dbReference type="Reactome" id="R-HSA-9648025">
    <property type="pathway name" value="EML4 and NUDC in mitotic spindle formation"/>
</dbReference>
<dbReference type="SignaLink" id="Q9Y6G9"/>
<dbReference type="SIGNOR" id="Q9Y6G9"/>
<dbReference type="BioGRID-ORCS" id="51143">
    <property type="hits" value="51 hits in 1159 CRISPR screens"/>
</dbReference>
<dbReference type="CD-CODE" id="8C2F96ED">
    <property type="entry name" value="Centrosome"/>
</dbReference>
<dbReference type="CD-CODE" id="FB4E32DD">
    <property type="entry name" value="Presynaptic clusters and postsynaptic densities"/>
</dbReference>
<dbReference type="ChiTaRS" id="DYNC1LI1">
    <property type="organism name" value="human"/>
</dbReference>
<dbReference type="GeneWiki" id="DYNC1LI1"/>
<dbReference type="GenomeRNAi" id="51143"/>
<dbReference type="Pharos" id="Q9Y6G9">
    <property type="development level" value="Tbio"/>
</dbReference>
<dbReference type="PRO" id="PR:Q9Y6G9"/>
<dbReference type="Proteomes" id="UP000005640">
    <property type="component" value="Chromosome 3"/>
</dbReference>
<dbReference type="RNAct" id="Q9Y6G9">
    <property type="molecule type" value="protein"/>
</dbReference>
<dbReference type="Bgee" id="ENSG00000144635">
    <property type="expression patterns" value="Expressed in cortical plate and 207 other cell types or tissues"/>
</dbReference>
<dbReference type="ExpressionAtlas" id="Q9Y6G9">
    <property type="expression patterns" value="baseline and differential"/>
</dbReference>
<dbReference type="GO" id="GO:0005813">
    <property type="term" value="C:centrosome"/>
    <property type="evidence" value="ECO:0000314"/>
    <property type="project" value="UniProtKB"/>
</dbReference>
<dbReference type="GO" id="GO:0005868">
    <property type="term" value="C:cytoplasmic dynein complex"/>
    <property type="evidence" value="ECO:0000314"/>
    <property type="project" value="UniProtKB"/>
</dbReference>
<dbReference type="GO" id="GO:0005829">
    <property type="term" value="C:cytosol"/>
    <property type="evidence" value="ECO:0000304"/>
    <property type="project" value="Reactome"/>
</dbReference>
<dbReference type="GO" id="GO:0030666">
    <property type="term" value="C:endocytic vesicle membrane"/>
    <property type="evidence" value="ECO:0000314"/>
    <property type="project" value="UniProtKB"/>
</dbReference>
<dbReference type="GO" id="GO:0101003">
    <property type="term" value="C:ficolin-1-rich granule membrane"/>
    <property type="evidence" value="ECO:0000304"/>
    <property type="project" value="Reactome"/>
</dbReference>
<dbReference type="GO" id="GO:0000776">
    <property type="term" value="C:kinetochore"/>
    <property type="evidence" value="ECO:0000314"/>
    <property type="project" value="UniProtKB"/>
</dbReference>
<dbReference type="GO" id="GO:0016020">
    <property type="term" value="C:membrane"/>
    <property type="evidence" value="ECO:0007005"/>
    <property type="project" value="UniProtKB"/>
</dbReference>
<dbReference type="GO" id="GO:0005874">
    <property type="term" value="C:microtubule"/>
    <property type="evidence" value="ECO:0000305"/>
    <property type="project" value="UniProt"/>
</dbReference>
<dbReference type="GO" id="GO:0005886">
    <property type="term" value="C:plasma membrane"/>
    <property type="evidence" value="ECO:0000304"/>
    <property type="project" value="Reactome"/>
</dbReference>
<dbReference type="GO" id="GO:0055038">
    <property type="term" value="C:recycling endosome membrane"/>
    <property type="evidence" value="ECO:0007669"/>
    <property type="project" value="UniProtKB-SubCell"/>
</dbReference>
<dbReference type="GO" id="GO:0030667">
    <property type="term" value="C:secretory granule membrane"/>
    <property type="evidence" value="ECO:0000304"/>
    <property type="project" value="Reactome"/>
</dbReference>
<dbReference type="GO" id="GO:0000922">
    <property type="term" value="C:spindle pole"/>
    <property type="evidence" value="ECO:0000314"/>
    <property type="project" value="UniProtKB"/>
</dbReference>
<dbReference type="GO" id="GO:0005524">
    <property type="term" value="F:ATP binding"/>
    <property type="evidence" value="ECO:0007669"/>
    <property type="project" value="UniProtKB-KW"/>
</dbReference>
<dbReference type="GO" id="GO:0045504">
    <property type="term" value="F:dynein heavy chain binding"/>
    <property type="evidence" value="ECO:0000353"/>
    <property type="project" value="FlyBase"/>
</dbReference>
<dbReference type="GO" id="GO:0019003">
    <property type="term" value="F:GDP binding"/>
    <property type="evidence" value="ECO:0000314"/>
    <property type="project" value="FlyBase"/>
</dbReference>
<dbReference type="GO" id="GO:0060090">
    <property type="term" value="F:molecular adaptor activity"/>
    <property type="evidence" value="ECO:0000269"/>
    <property type="project" value="DisProt"/>
</dbReference>
<dbReference type="GO" id="GO:0030674">
    <property type="term" value="F:protein-macromolecule adaptor activity"/>
    <property type="evidence" value="ECO:0000314"/>
    <property type="project" value="UniProt"/>
</dbReference>
<dbReference type="GO" id="GO:0003723">
    <property type="term" value="F:RNA binding"/>
    <property type="evidence" value="ECO:0007005"/>
    <property type="project" value="UniProtKB"/>
</dbReference>
<dbReference type="GO" id="GO:0051301">
    <property type="term" value="P:cell division"/>
    <property type="evidence" value="ECO:0007669"/>
    <property type="project" value="UniProtKB-KW"/>
</dbReference>
<dbReference type="GO" id="GO:0061502">
    <property type="term" value="P:early endosome to recycling endosome transport"/>
    <property type="evidence" value="ECO:0000314"/>
    <property type="project" value="UniProt"/>
</dbReference>
<dbReference type="GO" id="GO:0000226">
    <property type="term" value="P:microtubule cytoskeleton organization"/>
    <property type="evidence" value="ECO:0000318"/>
    <property type="project" value="GO_Central"/>
</dbReference>
<dbReference type="GO" id="GO:0007018">
    <property type="term" value="P:microtubule-based movement"/>
    <property type="evidence" value="ECO:0000314"/>
    <property type="project" value="UniProt"/>
</dbReference>
<dbReference type="GO" id="GO:0090267">
    <property type="term" value="P:positive regulation of mitotic cell cycle spindle assembly checkpoint"/>
    <property type="evidence" value="ECO:0000315"/>
    <property type="project" value="UniProtKB"/>
</dbReference>
<dbReference type="GO" id="GO:0060627">
    <property type="term" value="P:regulation of vesicle-mediated transport"/>
    <property type="evidence" value="ECO:0000314"/>
    <property type="project" value="UniProtKB"/>
</dbReference>
<dbReference type="DisProt" id="DP02547"/>
<dbReference type="Gene3D" id="3.40.50.300">
    <property type="entry name" value="P-loop containing nucleotide triphosphate hydrolases"/>
    <property type="match status" value="1"/>
</dbReference>
<dbReference type="InterPro" id="IPR008467">
    <property type="entry name" value="Dynein1_light_intermed_chain"/>
</dbReference>
<dbReference type="InterPro" id="IPR022780">
    <property type="entry name" value="Dynein_light_int_chain"/>
</dbReference>
<dbReference type="InterPro" id="IPR027417">
    <property type="entry name" value="P-loop_NTPase"/>
</dbReference>
<dbReference type="PANTHER" id="PTHR12688:SF2">
    <property type="entry name" value="CYTOPLASMIC DYNEIN 1 LIGHT INTERMEDIATE CHAIN 1"/>
    <property type="match status" value="1"/>
</dbReference>
<dbReference type="PANTHER" id="PTHR12688">
    <property type="entry name" value="DYNEIN LIGHT INTERMEDIATE CHAIN"/>
    <property type="match status" value="1"/>
</dbReference>
<dbReference type="Pfam" id="PF05783">
    <property type="entry name" value="DLIC"/>
    <property type="match status" value="1"/>
</dbReference>
<dbReference type="SUPFAM" id="SSF52540">
    <property type="entry name" value="P-loop containing nucleoside triphosphate hydrolases"/>
    <property type="match status" value="1"/>
</dbReference>
<evidence type="ECO:0000250" key="1"/>
<evidence type="ECO:0000255" key="2"/>
<evidence type="ECO:0000256" key="3">
    <source>
        <dbReference type="SAM" id="MobiDB-lite"/>
    </source>
</evidence>
<evidence type="ECO:0000269" key="4">
    <source>
    </source>
</evidence>
<evidence type="ECO:0000269" key="5">
    <source>
    </source>
</evidence>
<evidence type="ECO:0000269" key="6">
    <source>
    </source>
</evidence>
<evidence type="ECO:0000269" key="7">
    <source>
    </source>
</evidence>
<evidence type="ECO:0000269" key="8">
    <source ref="1"/>
</evidence>
<evidence type="ECO:0000269" key="9">
    <source ref="2"/>
</evidence>
<evidence type="ECO:0000303" key="10">
    <source>
    </source>
</evidence>
<evidence type="ECO:0000305" key="11"/>
<evidence type="ECO:0007744" key="12">
    <source>
    </source>
</evidence>
<evidence type="ECO:0007744" key="13">
    <source>
    </source>
</evidence>
<evidence type="ECO:0007744" key="14">
    <source>
    </source>
</evidence>
<evidence type="ECO:0007744" key="15">
    <source>
    </source>
</evidence>
<evidence type="ECO:0007744" key="16">
    <source>
    </source>
</evidence>
<evidence type="ECO:0007744" key="17">
    <source>
    </source>
</evidence>
<evidence type="ECO:0007744" key="18">
    <source>
    </source>
</evidence>
<evidence type="ECO:0007744" key="19">
    <source>
    </source>
</evidence>
<evidence type="ECO:0007744" key="20">
    <source>
    </source>
</evidence>
<evidence type="ECO:0007829" key="21">
    <source>
        <dbReference type="PDB" id="6B9H"/>
    </source>
</evidence>
<organism>
    <name type="scientific">Homo sapiens</name>
    <name type="common">Human</name>
    <dbReference type="NCBI Taxonomy" id="9606"/>
    <lineage>
        <taxon>Eukaryota</taxon>
        <taxon>Metazoa</taxon>
        <taxon>Chordata</taxon>
        <taxon>Craniata</taxon>
        <taxon>Vertebrata</taxon>
        <taxon>Euteleostomi</taxon>
        <taxon>Mammalia</taxon>
        <taxon>Eutheria</taxon>
        <taxon>Euarchontoglires</taxon>
        <taxon>Primates</taxon>
        <taxon>Haplorrhini</taxon>
        <taxon>Catarrhini</taxon>
        <taxon>Hominidae</taxon>
        <taxon>Homo</taxon>
    </lineage>
</organism>
<protein>
    <recommendedName>
        <fullName>Cytoplasmic dynein 1 light intermediate chain 1</fullName>
        <shortName>LIC1</shortName>
    </recommendedName>
    <alternativeName>
        <fullName>Dynein light chain A</fullName>
        <shortName>DLC-A</shortName>
    </alternativeName>
    <alternativeName>
        <fullName>Dynein light intermediate chain 1, cytosolic</fullName>
        <shortName evidence="10">DLIC-1</shortName>
    </alternativeName>
</protein>
<gene>
    <name type="primary">DYNC1LI1</name>
    <name type="synonym">DNCLI1</name>
</gene>
<accession>Q9Y6G9</accession>
<accession>A2RRG7</accession>
<accession>Q53HC8</accession>
<accession>Q53HK7</accession>
<sequence length="523" mass="56579">MAAVGRVGSFGSSPPGLSSTYTGGPLGNEIASGNGGAAAGDDEDGQNLWSCILSEVSTRSRSKLPAGKNVLLLGEDGAGKTSLIRKIQGIEEYKKGRGLEYLYLNVHDEDRDDQTRCNVWILDGDLYHKGLLKFSLDAVSLKDTLVMLVVDMSKPWTALDSLQKWASVVREHVDKLKIPPEEMKQMEQKLIRDFQEYVEPGEDFPASPQRRNTASQEDKDDSVVLPLGADTLTHNLGIPVLVVCTKCDAISVLEKEHDYRDEHFDFIQSHIRKFCLQYGAALIYTSVKENKNIDLVYKYIVQKLYGFPYKIPAVVVEKDAVFIPAGWDNDKKIGILHENFQTLKAEDNFEDIITKPPVRKFVHEKEIMAEDDQVFLMKLQSLLAKQPPTAAGRPVDASPRVPGGSPRTPNRSVSSNVASVSPIPAGSKKIDPNMKAGATSEGVLANFFNSLLSKKTGSPGGPGVSGGSPAGGAGGGSSGLPPSTKKSGQKPVLDVHAELDRITRKPVTVSPTTPTSPTEGEAS</sequence>
<feature type="chain" id="PRO_0000114666" description="Cytoplasmic dynein 1 light intermediate chain 1">
    <location>
        <begin position="1"/>
        <end position="523"/>
    </location>
</feature>
<feature type="region of interest" description="Disordered" evidence="3">
    <location>
        <begin position="1"/>
        <end position="25"/>
    </location>
</feature>
<feature type="region of interest" description="Disordered" evidence="3">
    <location>
        <begin position="387"/>
        <end position="434"/>
    </location>
</feature>
<feature type="region of interest" description="Disordered" evidence="3">
    <location>
        <begin position="456"/>
        <end position="523"/>
    </location>
</feature>
<feature type="compositionally biased region" description="Low complexity" evidence="3">
    <location>
        <begin position="9"/>
        <end position="19"/>
    </location>
</feature>
<feature type="compositionally biased region" description="Low complexity" evidence="3">
    <location>
        <begin position="412"/>
        <end position="421"/>
    </location>
</feature>
<feature type="compositionally biased region" description="Gly residues" evidence="3">
    <location>
        <begin position="458"/>
        <end position="478"/>
    </location>
</feature>
<feature type="compositionally biased region" description="Basic and acidic residues" evidence="3">
    <location>
        <begin position="493"/>
        <end position="503"/>
    </location>
</feature>
<feature type="compositionally biased region" description="Low complexity" evidence="3">
    <location>
        <begin position="506"/>
        <end position="523"/>
    </location>
</feature>
<feature type="binding site" evidence="2">
    <location>
        <begin position="74"/>
        <end position="81"/>
    </location>
    <ligand>
        <name>ATP</name>
        <dbReference type="ChEBI" id="CHEBI:30616"/>
    </ligand>
</feature>
<feature type="modified residue" description="Phosphoserine" evidence="4 12 13 14 15 16 17 18 19 20">
    <location>
        <position position="207"/>
    </location>
</feature>
<feature type="modified residue" description="Phosphothreonine" evidence="14">
    <location>
        <position position="213"/>
    </location>
</feature>
<feature type="modified residue" description="Phosphoserine" evidence="4 15 17 19">
    <location>
        <position position="398"/>
    </location>
</feature>
<feature type="modified residue" description="Phosphoserine" evidence="4 19">
    <location>
        <position position="405"/>
    </location>
</feature>
<feature type="modified residue" description="Phosphothreonine" evidence="4 19">
    <location>
        <position position="408"/>
    </location>
</feature>
<feature type="modified residue" description="Phosphoserine" evidence="19">
    <location>
        <position position="412"/>
    </location>
</feature>
<feature type="modified residue" description="Phosphoserine" evidence="14 17">
    <location>
        <position position="419"/>
    </location>
</feature>
<feature type="modified residue" description="Phosphoserine" evidence="14 17 19">
    <location>
        <position position="421"/>
    </location>
</feature>
<feature type="modified residue" description="Phosphoserine" evidence="19">
    <location>
        <position position="427"/>
    </location>
</feature>
<feature type="modified residue" description="Phosphoserine" evidence="15 17 19">
    <location>
        <position position="487"/>
    </location>
</feature>
<feature type="modified residue" description="Phosphoserine" evidence="14 16 19 20">
    <location>
        <position position="510"/>
    </location>
</feature>
<feature type="modified residue" description="Phosphothreonine" evidence="14 16">
    <location>
        <position position="512"/>
    </location>
</feature>
<feature type="modified residue" description="Phosphothreonine" evidence="14 16">
    <location>
        <position position="513"/>
    </location>
</feature>
<feature type="modified residue" description="Phosphothreonine" evidence="14 16">
    <location>
        <position position="515"/>
    </location>
</feature>
<feature type="modified residue" description="Phosphoserine" evidence="14 16 17 18 19">
    <location>
        <position position="516"/>
    </location>
</feature>
<feature type="sequence variant" id="VAR_061141" description="In dbSNP:rs34181332.">
    <original>M</original>
    <variation>T</variation>
    <location>
        <position position="147"/>
    </location>
</feature>
<feature type="sequence variant" id="VAR_023325" description="In dbSNP:rs2303857." evidence="8 9">
    <original>Q</original>
    <variation>R</variation>
    <location>
        <position position="277"/>
    </location>
</feature>
<feature type="sequence conflict" description="In Ref. 2; BAD96293." evidence="11" ref="2">
    <original>M</original>
    <variation>I</variation>
    <location>
        <position position="186"/>
    </location>
</feature>
<feature type="sequence conflict" description="In Ref. 2; BAD96293." evidence="11" ref="2">
    <original>R</original>
    <variation>G</variation>
    <location>
        <position position="210"/>
    </location>
</feature>
<feature type="sequence conflict" description="In Ref. 1; AAD44481." evidence="11" ref="1">
    <original>L</original>
    <variation>V</variation>
    <location>
        <position position="225"/>
    </location>
</feature>
<feature type="sequence conflict" description="In Ref. 1; AAD44481." evidence="11" ref="1">
    <original>I</original>
    <variation>F</variation>
    <location>
        <position position="267"/>
    </location>
</feature>
<feature type="sequence conflict" description="In Ref. 2; BAD96293." evidence="11" ref="2">
    <original>D</original>
    <variation>G</variation>
    <location>
        <position position="351"/>
    </location>
</feature>
<feature type="helix" evidence="21">
    <location>
        <begin position="443"/>
        <end position="453"/>
    </location>
</feature>
<proteinExistence type="evidence at protein level"/>
<keyword id="KW-0002">3D-structure</keyword>
<keyword id="KW-0067">ATP-binding</keyword>
<keyword id="KW-0131">Cell cycle</keyword>
<keyword id="KW-0132">Cell division</keyword>
<keyword id="KW-0137">Centromere</keyword>
<keyword id="KW-0158">Chromosome</keyword>
<keyword id="KW-0963">Cytoplasm</keyword>
<keyword id="KW-0206">Cytoskeleton</keyword>
<keyword id="KW-0243">Dynein</keyword>
<keyword id="KW-0967">Endosome</keyword>
<keyword id="KW-0945">Host-virus interaction</keyword>
<keyword id="KW-0995">Kinetochore</keyword>
<keyword id="KW-0472">Membrane</keyword>
<keyword id="KW-0493">Microtubule</keyword>
<keyword id="KW-0498">Mitosis</keyword>
<keyword id="KW-0505">Motor protein</keyword>
<keyword id="KW-0547">Nucleotide-binding</keyword>
<keyword id="KW-0597">Phosphoprotein</keyword>
<keyword id="KW-1267">Proteomics identification</keyword>
<keyword id="KW-1185">Reference proteome</keyword>
<keyword id="KW-0813">Transport</keyword>
<name>DC1L1_HUMAN</name>
<reference key="1">
    <citation type="submission" date="1998-07" db="EMBL/GenBank/DDBJ databases">
        <title>Human dynein light chain-A mRNA, complete cds.</title>
        <authorList>
            <person name="Dai M."/>
            <person name="Peng Y."/>
            <person name="Song H."/>
            <person name="Huang Q."/>
            <person name="Mao Y."/>
            <person name="Zhang Q."/>
            <person name="Mao M."/>
            <person name="Fu G."/>
            <person name="Luo M."/>
            <person name="Chen J."/>
            <person name="Hu R."/>
        </authorList>
    </citation>
    <scope>NUCLEOTIDE SEQUENCE [MRNA]</scope>
    <scope>VARIANT ARG-277</scope>
    <source>
        <tissue>Pituitary</tissue>
    </source>
</reference>
<reference key="2">
    <citation type="submission" date="2005-04" db="EMBL/GenBank/DDBJ databases">
        <authorList>
            <person name="Suzuki Y."/>
            <person name="Sugano S."/>
            <person name="Totoki Y."/>
            <person name="Toyoda A."/>
            <person name="Takeda T."/>
            <person name="Sakaki Y."/>
            <person name="Tanaka A."/>
            <person name="Yokoyama S."/>
        </authorList>
    </citation>
    <scope>NUCLEOTIDE SEQUENCE [LARGE SCALE MRNA]</scope>
    <scope>VARIANT ARG-277</scope>
    <source>
        <tissue>Cerebellum</tissue>
        <tissue>Coronary artery</tissue>
    </source>
</reference>
<reference key="3">
    <citation type="submission" date="2005-07" db="EMBL/GenBank/DDBJ databases">
        <authorList>
            <person name="Mural R.J."/>
            <person name="Istrail S."/>
            <person name="Sutton G.G."/>
            <person name="Florea L."/>
            <person name="Halpern A.L."/>
            <person name="Mobarry C.M."/>
            <person name="Lippert R."/>
            <person name="Walenz B."/>
            <person name="Shatkay H."/>
            <person name="Dew I."/>
            <person name="Miller J.R."/>
            <person name="Flanigan M.J."/>
            <person name="Edwards N.J."/>
            <person name="Bolanos R."/>
            <person name="Fasulo D."/>
            <person name="Halldorsson B.V."/>
            <person name="Hannenhalli S."/>
            <person name="Turner R."/>
            <person name="Yooseph S."/>
            <person name="Lu F."/>
            <person name="Nusskern D.R."/>
            <person name="Shue B.C."/>
            <person name="Zheng X.H."/>
            <person name="Zhong F."/>
            <person name="Delcher A.L."/>
            <person name="Huson D.H."/>
            <person name="Kravitz S.A."/>
            <person name="Mouchard L."/>
            <person name="Reinert K."/>
            <person name="Remington K.A."/>
            <person name="Clark A.G."/>
            <person name="Waterman M.S."/>
            <person name="Eichler E.E."/>
            <person name="Adams M.D."/>
            <person name="Hunkapiller M.W."/>
            <person name="Myers E.W."/>
            <person name="Venter J.C."/>
        </authorList>
    </citation>
    <scope>NUCLEOTIDE SEQUENCE [LARGE SCALE GENOMIC DNA]</scope>
</reference>
<reference key="4">
    <citation type="journal article" date="2004" name="Genome Res.">
        <title>The status, quality, and expansion of the NIH full-length cDNA project: the Mammalian Gene Collection (MGC).</title>
        <authorList>
            <consortium name="The MGC Project Team"/>
        </authorList>
    </citation>
    <scope>NUCLEOTIDE SEQUENCE [LARGE SCALE MRNA]</scope>
</reference>
<reference key="5">
    <citation type="journal article" date="2003" name="Nature">
        <title>Proteomic characterization of the human centrosome by protein correlation profiling.</title>
        <authorList>
            <person name="Andersen J.S."/>
            <person name="Wilkinson C.J."/>
            <person name="Mayor T."/>
            <person name="Mortensen P."/>
            <person name="Nigg E.A."/>
            <person name="Mann M."/>
        </authorList>
    </citation>
    <scope>IDENTIFICATION BY MASS SPECTROMETRY</scope>
    <source>
        <tissue>Lymphoblast</tissue>
    </source>
</reference>
<reference key="6">
    <citation type="journal article" date="2006" name="Cell">
        <title>Global, in vivo, and site-specific phosphorylation dynamics in signaling networks.</title>
        <authorList>
            <person name="Olsen J.V."/>
            <person name="Blagoev B."/>
            <person name="Gnad F."/>
            <person name="Macek B."/>
            <person name="Kumar C."/>
            <person name="Mortensen P."/>
            <person name="Mann M."/>
        </authorList>
    </citation>
    <scope>PHOSPHORYLATION [LARGE SCALE ANALYSIS] AT SER-207</scope>
    <scope>IDENTIFICATION BY MASS SPECTROMETRY [LARGE SCALE ANALYSIS]</scope>
    <source>
        <tissue>Cervix carcinoma</tissue>
    </source>
</reference>
<reference key="7">
    <citation type="journal article" date="2006" name="Nat. Biotechnol.">
        <title>A probability-based approach for high-throughput protein phosphorylation analysis and site localization.</title>
        <authorList>
            <person name="Beausoleil S.A."/>
            <person name="Villen J."/>
            <person name="Gerber S.A."/>
            <person name="Rush J."/>
            <person name="Gygi S.P."/>
        </authorList>
    </citation>
    <scope>IDENTIFICATION BY MASS SPECTROMETRY [LARGE SCALE ANALYSIS]</scope>
    <source>
        <tissue>Cervix carcinoma</tissue>
    </source>
</reference>
<reference key="8">
    <citation type="journal article" date="2007" name="J. Proteome Res.">
        <title>Improved titanium dioxide enrichment of phosphopeptides from HeLa cells and high confident phosphopeptide identification by cross-validation of MS/MS and MS/MS/MS spectra.</title>
        <authorList>
            <person name="Yu L.R."/>
            <person name="Zhu Z."/>
            <person name="Chan K.C."/>
            <person name="Issaq H.J."/>
            <person name="Dimitrov D.S."/>
            <person name="Veenstra T.D."/>
        </authorList>
    </citation>
    <scope>IDENTIFICATION BY MASS SPECTROMETRY [LARGE SCALE ANALYSIS]</scope>
    <source>
        <tissue>Cervix carcinoma</tissue>
    </source>
</reference>
<reference key="9">
    <citation type="journal article" date="2008" name="J. Proteome Res.">
        <title>Combining protein-based IMAC, peptide-based IMAC, and MudPIT for efficient phosphoproteomic analysis.</title>
        <authorList>
            <person name="Cantin G.T."/>
            <person name="Yi W."/>
            <person name="Lu B."/>
            <person name="Park S.K."/>
            <person name="Xu T."/>
            <person name="Lee J.-D."/>
            <person name="Yates J.R. III"/>
        </authorList>
    </citation>
    <scope>PHOSPHORYLATION [LARGE SCALE ANALYSIS] AT SER-207</scope>
    <scope>IDENTIFICATION BY MASS SPECTROMETRY [LARGE SCALE ANALYSIS]</scope>
    <source>
        <tissue>Cervix carcinoma</tissue>
    </source>
</reference>
<reference key="10">
    <citation type="journal article" date="2008" name="Mol. Cell">
        <title>Kinase-selective enrichment enables quantitative phosphoproteomics of the kinome across the cell cycle.</title>
        <authorList>
            <person name="Daub H."/>
            <person name="Olsen J.V."/>
            <person name="Bairlein M."/>
            <person name="Gnad F."/>
            <person name="Oppermann F.S."/>
            <person name="Korner R."/>
            <person name="Greff Z."/>
            <person name="Keri G."/>
            <person name="Stemmann O."/>
            <person name="Mann M."/>
        </authorList>
    </citation>
    <scope>PHOSPHORYLATION [LARGE SCALE ANALYSIS] AT SER-207; SER-398 AND SER-487</scope>
    <scope>IDENTIFICATION BY MASS SPECTROMETRY [LARGE SCALE ANALYSIS]</scope>
    <source>
        <tissue>Cervix carcinoma</tissue>
    </source>
</reference>
<reference key="11">
    <citation type="journal article" date="2008" name="Proc. Natl. Acad. Sci. U.S.A.">
        <title>A quantitative atlas of mitotic phosphorylation.</title>
        <authorList>
            <person name="Dephoure N."/>
            <person name="Zhou C."/>
            <person name="Villen J."/>
            <person name="Beausoleil S.A."/>
            <person name="Bakalarski C.E."/>
            <person name="Elledge S.J."/>
            <person name="Gygi S.P."/>
        </authorList>
    </citation>
    <scope>PHOSPHORYLATION [LARGE SCALE ANALYSIS] AT SER-207; THR-213; SER-419; SER-421; SER-510; THR-512; THR-513; THR-515 AND SER-516</scope>
    <scope>IDENTIFICATION BY MASS SPECTROMETRY [LARGE SCALE ANALYSIS]</scope>
    <source>
        <tissue>Cervix carcinoma</tissue>
    </source>
</reference>
<reference key="12">
    <citation type="journal article" date="2009" name="Anal. Chem.">
        <title>Lys-N and trypsin cover complementary parts of the phosphoproteome in a refined SCX-based approach.</title>
        <authorList>
            <person name="Gauci S."/>
            <person name="Helbig A.O."/>
            <person name="Slijper M."/>
            <person name="Krijgsveld J."/>
            <person name="Heck A.J."/>
            <person name="Mohammed S."/>
        </authorList>
    </citation>
    <scope>IDENTIFICATION BY MASS SPECTROMETRY [LARGE SCALE ANALYSIS]</scope>
</reference>
<reference key="13">
    <citation type="journal article" date="2009" name="EMBO J.">
        <title>Dynein light intermediate chain 1 is required for progress through the spindle assembly checkpoint.</title>
        <authorList>
            <person name="Sivaram M.V."/>
            <person name="Wadzinski T.L."/>
            <person name="Redick S.D."/>
            <person name="Manna T."/>
            <person name="Doxsey S.J."/>
        </authorList>
    </citation>
    <scope>FUNCTION IN THE SPINDLE ASSEMBLY CHECKPOINT</scope>
    <scope>SUBUNIT</scope>
    <scope>PHOSPHORYLATION AT SER-207; SER-398; SER-405 AND THR-408</scope>
    <scope>SUBCELLULAR LOCATION</scope>
</reference>
<reference key="14">
    <citation type="journal article" date="2009" name="Cell Host Microbe">
        <title>Adenovirus transport via direct interaction of cytoplasmic dynein with the viral capsid hexon subunit.</title>
        <authorList>
            <person name="Bremner K.H."/>
            <person name="Scherer J."/>
            <person name="Yi J."/>
            <person name="Vershinin M."/>
            <person name="Gross S.P."/>
            <person name="Vallee R.B."/>
        </authorList>
    </citation>
    <scope>INTERACTION WITH HUMAN ADENOVIRUS HEXON PROTEIN (MICROBIAL INFECTION)</scope>
</reference>
<reference key="15">
    <citation type="journal article" date="2009" name="Mol. Cell. Proteomics">
        <title>Large-scale proteomics analysis of the human kinome.</title>
        <authorList>
            <person name="Oppermann F.S."/>
            <person name="Gnad F."/>
            <person name="Olsen J.V."/>
            <person name="Hornberger R."/>
            <person name="Greff Z."/>
            <person name="Keri G."/>
            <person name="Mann M."/>
            <person name="Daub H."/>
        </authorList>
    </citation>
    <scope>IDENTIFICATION BY MASS SPECTROMETRY [LARGE SCALE ANALYSIS]</scope>
</reference>
<reference key="16">
    <citation type="journal article" date="2009" name="Sci. Signal.">
        <title>Quantitative phosphoproteomic analysis of T cell receptor signaling reveals system-wide modulation of protein-protein interactions.</title>
        <authorList>
            <person name="Mayya V."/>
            <person name="Lundgren D.H."/>
            <person name="Hwang S.-I."/>
            <person name="Rezaul K."/>
            <person name="Wu L."/>
            <person name="Eng J.K."/>
            <person name="Rodionov V."/>
            <person name="Han D.K."/>
        </authorList>
    </citation>
    <scope>PHOSPHORYLATION [LARGE SCALE ANALYSIS] AT SER-207; SER-510; THR-512; THR-513; THR-515 AND SER-516</scope>
    <scope>IDENTIFICATION BY MASS SPECTROMETRY [LARGE SCALE ANALYSIS]</scope>
    <source>
        <tissue>Leukemic T-cell</tissue>
    </source>
</reference>
<reference key="17">
    <citation type="journal article" date="2010" name="J. Cell Sci.">
        <title>Rab11-FIP3 links the Rab11 GTPase and cytoplasmic dynein to mediate transport to the endosomal-recycling compartment.</title>
        <authorList>
            <person name="Horgan C.P."/>
            <person name="Hanscom S.R."/>
            <person name="Jolly R.S."/>
            <person name="Futter C.E."/>
            <person name="McCaffrey M.W."/>
        </authorList>
    </citation>
    <scope>FUNCTION</scope>
    <scope>INTERACTION WITH RAB11FIP3</scope>
    <scope>SUBCELLULAR LOCATION</scope>
</reference>
<reference key="18">
    <citation type="journal article" date="2010" name="Sci. Signal.">
        <title>Quantitative phosphoproteomics reveals widespread full phosphorylation site occupancy during mitosis.</title>
        <authorList>
            <person name="Olsen J.V."/>
            <person name="Vermeulen M."/>
            <person name="Santamaria A."/>
            <person name="Kumar C."/>
            <person name="Miller M.L."/>
            <person name="Jensen L.J."/>
            <person name="Gnad F."/>
            <person name="Cox J."/>
            <person name="Jensen T.S."/>
            <person name="Nigg E.A."/>
            <person name="Brunak S."/>
            <person name="Mann M."/>
        </authorList>
    </citation>
    <scope>PHOSPHORYLATION [LARGE SCALE ANALYSIS] AT SER-207; SER-398; SER-419; SER-421; SER-487 AND SER-516</scope>
    <scope>IDENTIFICATION BY MASS SPECTROMETRY [LARGE SCALE ANALYSIS]</scope>
    <source>
        <tissue>Cervix carcinoma</tissue>
    </source>
</reference>
<reference key="19">
    <citation type="journal article" date="2011" name="BMC Syst. Biol.">
        <title>Initial characterization of the human central proteome.</title>
        <authorList>
            <person name="Burkard T.R."/>
            <person name="Planyavsky M."/>
            <person name="Kaupe I."/>
            <person name="Breitwieser F.P."/>
            <person name="Buerckstuemmer T."/>
            <person name="Bennett K.L."/>
            <person name="Superti-Furga G."/>
            <person name="Colinge J."/>
        </authorList>
    </citation>
    <scope>IDENTIFICATION BY MASS SPECTROMETRY [LARGE SCALE ANALYSIS]</scope>
</reference>
<reference key="20">
    <citation type="journal article" date="2011" name="Sci. Signal.">
        <title>System-wide temporal characterization of the proteome and phosphoproteome of human embryonic stem cell differentiation.</title>
        <authorList>
            <person name="Rigbolt K.T."/>
            <person name="Prokhorova T.A."/>
            <person name="Akimov V."/>
            <person name="Henningsen J."/>
            <person name="Johansen P.T."/>
            <person name="Kratchmarova I."/>
            <person name="Kassem M."/>
            <person name="Mann M."/>
            <person name="Olsen J.V."/>
            <person name="Blagoev B."/>
        </authorList>
    </citation>
    <scope>PHOSPHORYLATION [LARGE SCALE ANALYSIS] AT SER-207 AND SER-516</scope>
    <scope>IDENTIFICATION BY MASS SPECTROMETRY [LARGE SCALE ANALYSIS]</scope>
</reference>
<reference key="21">
    <citation type="journal article" date="2013" name="J. Proteome Res.">
        <title>Toward a comprehensive characterization of a human cancer cell phosphoproteome.</title>
        <authorList>
            <person name="Zhou H."/>
            <person name="Di Palma S."/>
            <person name="Preisinger C."/>
            <person name="Peng M."/>
            <person name="Polat A.N."/>
            <person name="Heck A.J."/>
            <person name="Mohammed S."/>
        </authorList>
    </citation>
    <scope>PHOSPHORYLATION [LARGE SCALE ANALYSIS] AT SER-207; SER-398; SER-405; THR-408; SER-412; SER-421; SER-427; SER-487; SER-510 AND SER-516</scope>
    <scope>IDENTIFICATION BY MASS SPECTROMETRY [LARGE SCALE ANALYSIS]</scope>
    <source>
        <tissue>Cervix carcinoma</tissue>
        <tissue>Erythroleukemia</tissue>
    </source>
</reference>
<reference key="22">
    <citation type="journal article" date="2014" name="J. Proteomics">
        <title>An enzyme assisted RP-RPLC approach for in-depth analysis of human liver phosphoproteome.</title>
        <authorList>
            <person name="Bian Y."/>
            <person name="Song C."/>
            <person name="Cheng K."/>
            <person name="Dong M."/>
            <person name="Wang F."/>
            <person name="Huang J."/>
            <person name="Sun D."/>
            <person name="Wang L."/>
            <person name="Ye M."/>
            <person name="Zou H."/>
        </authorList>
    </citation>
    <scope>PHOSPHORYLATION [LARGE SCALE ANALYSIS] AT SER-207 AND SER-510</scope>
    <scope>IDENTIFICATION BY MASS SPECTROMETRY [LARGE SCALE ANALYSIS]</scope>
    <source>
        <tissue>Liver</tissue>
    </source>
</reference>
<reference key="23">
    <citation type="journal article" date="2022" name="Nat. Commun.">
        <title>RUFY3 and RUFY4 are ARL8 effectors that promote coupling of endolysosomes to dynein-dynactin.</title>
        <authorList>
            <person name="Keren-Kaplan T."/>
            <person name="Saric A."/>
            <person name="Ghosh S."/>
            <person name="Williamson C.D."/>
            <person name="Jia R."/>
            <person name="Li Y."/>
            <person name="Bonifacino J.S."/>
        </authorList>
    </citation>
    <scope>INTERACTION WITH RUFY3</scope>
</reference>